<sequence length="322" mass="36033">MMDPYATTHRRLKQIQGHFMTPQSLRVLPQFTLNSLNNKSNISSMWRKLTTSSRIGAVSIPPLTAYYIFKLFKGKHRKFINDKDIEIIIKEISGNDIFDQVVKLASKVIGFLGVIQISNRMETHLGVKLTFSKSYQLLVTLSSILDTILSFTKLTQKWGIIFCIVSILYCIINIRMLYLTLAHNKTVERLLSVTRTKCQGFKMNIPALGAWGSVVAITFYIWLKEAKKLAQSTGGILTMTAFLLSAIAAIRVGLRAAMTSFPGLTPFEGSSAVVIAIILGALPLIPYYTTSEWSRTLLSGYLSIVISMIINSFFAWKTPSML</sequence>
<name>Y6680_DICDI</name>
<proteinExistence type="predicted"/>
<organism>
    <name type="scientific">Dictyostelium discoideum</name>
    <name type="common">Social amoeba</name>
    <dbReference type="NCBI Taxonomy" id="44689"/>
    <lineage>
        <taxon>Eukaryota</taxon>
        <taxon>Amoebozoa</taxon>
        <taxon>Evosea</taxon>
        <taxon>Eumycetozoa</taxon>
        <taxon>Dictyostelia</taxon>
        <taxon>Dictyosteliales</taxon>
        <taxon>Dictyosteliaceae</taxon>
        <taxon>Dictyostelium</taxon>
    </lineage>
</organism>
<gene>
    <name type="ORF">DDB_G0287441</name>
</gene>
<protein>
    <recommendedName>
        <fullName>Uncharacterized transmembrane protein DDB_G0287441</fullName>
    </recommendedName>
</protein>
<evidence type="ECO:0000255" key="1"/>
<evidence type="ECO:0000305" key="2"/>
<reference key="1">
    <citation type="journal article" date="2005" name="Nature">
        <title>The genome of the social amoeba Dictyostelium discoideum.</title>
        <authorList>
            <person name="Eichinger L."/>
            <person name="Pachebat J.A."/>
            <person name="Gloeckner G."/>
            <person name="Rajandream M.A."/>
            <person name="Sucgang R."/>
            <person name="Berriman M."/>
            <person name="Song J."/>
            <person name="Olsen R."/>
            <person name="Szafranski K."/>
            <person name="Xu Q."/>
            <person name="Tunggal B."/>
            <person name="Kummerfeld S."/>
            <person name="Madera M."/>
            <person name="Konfortov B.A."/>
            <person name="Rivero F."/>
            <person name="Bankier A.T."/>
            <person name="Lehmann R."/>
            <person name="Hamlin N."/>
            <person name="Davies R."/>
            <person name="Gaudet P."/>
            <person name="Fey P."/>
            <person name="Pilcher K."/>
            <person name="Chen G."/>
            <person name="Saunders D."/>
            <person name="Sodergren E.J."/>
            <person name="Davis P."/>
            <person name="Kerhornou A."/>
            <person name="Nie X."/>
            <person name="Hall N."/>
            <person name="Anjard C."/>
            <person name="Hemphill L."/>
            <person name="Bason N."/>
            <person name="Farbrother P."/>
            <person name="Desany B."/>
            <person name="Just E."/>
            <person name="Morio T."/>
            <person name="Rost R."/>
            <person name="Churcher C.M."/>
            <person name="Cooper J."/>
            <person name="Haydock S."/>
            <person name="van Driessche N."/>
            <person name="Cronin A."/>
            <person name="Goodhead I."/>
            <person name="Muzny D.M."/>
            <person name="Mourier T."/>
            <person name="Pain A."/>
            <person name="Lu M."/>
            <person name="Harper D."/>
            <person name="Lindsay R."/>
            <person name="Hauser H."/>
            <person name="James K.D."/>
            <person name="Quiles M."/>
            <person name="Madan Babu M."/>
            <person name="Saito T."/>
            <person name="Buchrieser C."/>
            <person name="Wardroper A."/>
            <person name="Felder M."/>
            <person name="Thangavelu M."/>
            <person name="Johnson D."/>
            <person name="Knights A."/>
            <person name="Loulseged H."/>
            <person name="Mungall K.L."/>
            <person name="Oliver K."/>
            <person name="Price C."/>
            <person name="Quail M.A."/>
            <person name="Urushihara H."/>
            <person name="Hernandez J."/>
            <person name="Rabbinowitsch E."/>
            <person name="Steffen D."/>
            <person name="Sanders M."/>
            <person name="Ma J."/>
            <person name="Kohara Y."/>
            <person name="Sharp S."/>
            <person name="Simmonds M.N."/>
            <person name="Spiegler S."/>
            <person name="Tivey A."/>
            <person name="Sugano S."/>
            <person name="White B."/>
            <person name="Walker D."/>
            <person name="Woodward J.R."/>
            <person name="Winckler T."/>
            <person name="Tanaka Y."/>
            <person name="Shaulsky G."/>
            <person name="Schleicher M."/>
            <person name="Weinstock G.M."/>
            <person name="Rosenthal A."/>
            <person name="Cox E.C."/>
            <person name="Chisholm R.L."/>
            <person name="Gibbs R.A."/>
            <person name="Loomis W.F."/>
            <person name="Platzer M."/>
            <person name="Kay R.R."/>
            <person name="Williams J.G."/>
            <person name="Dear P.H."/>
            <person name="Noegel A.A."/>
            <person name="Barrell B.G."/>
            <person name="Kuspa A."/>
        </authorList>
    </citation>
    <scope>NUCLEOTIDE SEQUENCE [LARGE SCALE GENOMIC DNA]</scope>
    <source>
        <strain>AX4</strain>
    </source>
</reference>
<keyword id="KW-0472">Membrane</keyword>
<keyword id="KW-1185">Reference proteome</keyword>
<keyword id="KW-0812">Transmembrane</keyword>
<keyword id="KW-1133">Transmembrane helix</keyword>
<accession>Q54KH2</accession>
<accession>C7G048</accession>
<accession>Q54KH1</accession>
<comment type="subcellular location">
    <subcellularLocation>
        <location evidence="2">Membrane</location>
        <topology evidence="2">Multi-pass membrane protein</topology>
    </subcellularLocation>
</comment>
<dbReference type="EMBL" id="AAFI02000100">
    <property type="protein sequence ID" value="EEU04072.1"/>
    <property type="molecule type" value="Genomic_DNA"/>
</dbReference>
<dbReference type="RefSeq" id="XP_002649124.1">
    <property type="nucleotide sequence ID" value="XM_002649078.1"/>
</dbReference>
<dbReference type="FunCoup" id="Q54KH2">
    <property type="interactions" value="141"/>
</dbReference>
<dbReference type="PaxDb" id="44689-DDB0266680"/>
<dbReference type="EnsemblProtists" id="EEU04072">
    <property type="protein sequence ID" value="EEU04072"/>
    <property type="gene ID" value="DDB_G0287441"/>
</dbReference>
<dbReference type="GeneID" id="8626082"/>
<dbReference type="KEGG" id="ddi:DDB_G0287441"/>
<dbReference type="dictyBase" id="DDB_G0287441"/>
<dbReference type="VEuPathDB" id="AmoebaDB:DDB_G0287441"/>
<dbReference type="eggNOG" id="ENOG502RH7H">
    <property type="taxonomic scope" value="Eukaryota"/>
</dbReference>
<dbReference type="HOGENOM" id="CLU_864432_0_0_1"/>
<dbReference type="InParanoid" id="Q54KH2"/>
<dbReference type="OMA" id="RMQTYLG"/>
<dbReference type="PRO" id="PR:Q54KH2"/>
<dbReference type="Proteomes" id="UP000002195">
    <property type="component" value="Chromosome 5"/>
</dbReference>
<dbReference type="GO" id="GO:0016020">
    <property type="term" value="C:membrane"/>
    <property type="evidence" value="ECO:0007669"/>
    <property type="project" value="UniProtKB-SubCell"/>
</dbReference>
<feature type="chain" id="PRO_0000345007" description="Uncharacterized transmembrane protein DDB_G0287441">
    <location>
        <begin position="1"/>
        <end position="322"/>
    </location>
</feature>
<feature type="transmembrane region" description="Helical" evidence="1">
    <location>
        <begin position="159"/>
        <end position="179"/>
    </location>
</feature>
<feature type="transmembrane region" description="Helical" evidence="1">
    <location>
        <begin position="203"/>
        <end position="223"/>
    </location>
</feature>
<feature type="transmembrane region" description="Helical" evidence="1">
    <location>
        <begin position="234"/>
        <end position="254"/>
    </location>
</feature>
<feature type="transmembrane region" description="Helical" evidence="1">
    <location>
        <begin position="267"/>
        <end position="287"/>
    </location>
</feature>
<feature type="transmembrane region" description="Helical" evidence="1">
    <location>
        <begin position="296"/>
        <end position="316"/>
    </location>
</feature>